<name>SECA_THEP1</name>
<organism>
    <name type="scientific">Thermotoga petrophila (strain ATCC BAA-488 / DSM 13995 / JCM 10881 / RKU-1)</name>
    <dbReference type="NCBI Taxonomy" id="390874"/>
    <lineage>
        <taxon>Bacteria</taxon>
        <taxon>Thermotogati</taxon>
        <taxon>Thermotogota</taxon>
        <taxon>Thermotogae</taxon>
        <taxon>Thermotogales</taxon>
        <taxon>Thermotogaceae</taxon>
        <taxon>Thermotoga</taxon>
    </lineage>
</organism>
<protein>
    <recommendedName>
        <fullName evidence="1">Protein translocase subunit SecA</fullName>
        <ecNumber evidence="1">7.4.2.8</ecNumber>
    </recommendedName>
</protein>
<evidence type="ECO:0000255" key="1">
    <source>
        <dbReference type="HAMAP-Rule" id="MF_01382"/>
    </source>
</evidence>
<sequence>MILFDKNKRILKKYAKMVSKINQIESDLRSKKNSELIRLSMVLKEKVNSFEDADEHLFEAFALVREAARRTLGMRPFDVQVMGGIALHEGKVAEMKTGEGKTLAATMPIYLNALIGKGVHLVTVNDYLARRDALWMGPVYLFLGLRVGVINSLGKSYEVVWKNPDLARKAIEENWSVWPDGFNGEVLKEESMNKEAVEAFQVELKEITRKEAYLCDVTYGTNNEFGFDYLRDNLVLDYNDKVQRGHFYAIVDEADSVLIDEARTPLIISGPSKESPSVYRRFAQIAKKFVKDKDFTVDEKARTIILTEEGVAKAEKIIGVENLYDPGNVSLLYHLINALKALHLFKKDVDYVVMNGEVIIVDEFTGRLLPGRRYSGGLHQAIEAKEGVPIKEESITYATITFQNYFRMYEKLAGMTGTAKTEESEFVQVYGMEVVVIPTHKPMIRKDHDDLVFRTQKEKYEKIVEEIEKRYKKGQPVLVGTTSIEKSELLSSMLKKKGIPHQVLNAKYHEKEAEIVAKAGQKGMVTIATNMAGRGTDIKLGPGVAELGGLCIIGTERHESRRIDNQLRGRAGRQGDPGESIFFLSLEDDLLRIFGSEQIGKVMNILKIEEGQPIQHPMLSKLIENIQKKVEGINFSIRKTLMEMDDVLDKQRRAVYSLRDQILLEKDYDEYLKDIFEDVVSTRVEEFCSGKNWDIESLKNSLSFFPAGLFDLDEKQFSSSEELHDYLFNRLWEEYQRKKQEIGEDYRKVIRFLMLRIIDDHWRRYLEEVEHVKEAVQLRSYGQKDPIVEFKKETYYMFDEMMRRINDTIANYVLRVVKVSEKDEKEAKEELGKIRLVHEEFNLVNRAMRRATEKKKKKDGLHSFGRIRVKR</sequence>
<reference key="1">
    <citation type="submission" date="2007-05" db="EMBL/GenBank/DDBJ databases">
        <title>Complete sequence of Thermotoga petrophila RKU-1.</title>
        <authorList>
            <consortium name="US DOE Joint Genome Institute"/>
            <person name="Copeland A."/>
            <person name="Lucas S."/>
            <person name="Lapidus A."/>
            <person name="Barry K."/>
            <person name="Glavina del Rio T."/>
            <person name="Dalin E."/>
            <person name="Tice H."/>
            <person name="Pitluck S."/>
            <person name="Sims D."/>
            <person name="Brettin T."/>
            <person name="Bruce D."/>
            <person name="Detter J.C."/>
            <person name="Han C."/>
            <person name="Tapia R."/>
            <person name="Schmutz J."/>
            <person name="Larimer F."/>
            <person name="Land M."/>
            <person name="Hauser L."/>
            <person name="Kyrpides N."/>
            <person name="Mikhailova N."/>
            <person name="Nelson K."/>
            <person name="Gogarten J.P."/>
            <person name="Noll K."/>
            <person name="Richardson P."/>
        </authorList>
    </citation>
    <scope>NUCLEOTIDE SEQUENCE [LARGE SCALE GENOMIC DNA]</scope>
    <source>
        <strain>ATCC BAA-488 / DSM 13995 / JCM 10881 / RKU-1</strain>
    </source>
</reference>
<dbReference type="EC" id="7.4.2.8" evidence="1"/>
<dbReference type="EMBL" id="CP000702">
    <property type="protein sequence ID" value="ABQ47228.1"/>
    <property type="molecule type" value="Genomic_DNA"/>
</dbReference>
<dbReference type="RefSeq" id="WP_004082002.1">
    <property type="nucleotide sequence ID" value="NC_009486.1"/>
</dbReference>
<dbReference type="SMR" id="A5IM05"/>
<dbReference type="STRING" id="390874.Tpet_1214"/>
<dbReference type="KEGG" id="tpt:Tpet_1214"/>
<dbReference type="eggNOG" id="COG0653">
    <property type="taxonomic scope" value="Bacteria"/>
</dbReference>
<dbReference type="HOGENOM" id="CLU_005314_3_0_0"/>
<dbReference type="Proteomes" id="UP000006558">
    <property type="component" value="Chromosome"/>
</dbReference>
<dbReference type="GO" id="GO:0031522">
    <property type="term" value="C:cell envelope Sec protein transport complex"/>
    <property type="evidence" value="ECO:0007669"/>
    <property type="project" value="TreeGrafter"/>
</dbReference>
<dbReference type="GO" id="GO:0005829">
    <property type="term" value="C:cytosol"/>
    <property type="evidence" value="ECO:0007669"/>
    <property type="project" value="TreeGrafter"/>
</dbReference>
<dbReference type="GO" id="GO:0005886">
    <property type="term" value="C:plasma membrane"/>
    <property type="evidence" value="ECO:0007669"/>
    <property type="project" value="UniProtKB-SubCell"/>
</dbReference>
<dbReference type="GO" id="GO:0005524">
    <property type="term" value="F:ATP binding"/>
    <property type="evidence" value="ECO:0007669"/>
    <property type="project" value="UniProtKB-UniRule"/>
</dbReference>
<dbReference type="GO" id="GO:0008564">
    <property type="term" value="F:protein-exporting ATPase activity"/>
    <property type="evidence" value="ECO:0007669"/>
    <property type="project" value="UniProtKB-EC"/>
</dbReference>
<dbReference type="GO" id="GO:0065002">
    <property type="term" value="P:intracellular protein transmembrane transport"/>
    <property type="evidence" value="ECO:0007669"/>
    <property type="project" value="UniProtKB-UniRule"/>
</dbReference>
<dbReference type="GO" id="GO:0017038">
    <property type="term" value="P:protein import"/>
    <property type="evidence" value="ECO:0007669"/>
    <property type="project" value="InterPro"/>
</dbReference>
<dbReference type="GO" id="GO:0006605">
    <property type="term" value="P:protein targeting"/>
    <property type="evidence" value="ECO:0007669"/>
    <property type="project" value="UniProtKB-UniRule"/>
</dbReference>
<dbReference type="GO" id="GO:0043952">
    <property type="term" value="P:protein transport by the Sec complex"/>
    <property type="evidence" value="ECO:0007669"/>
    <property type="project" value="TreeGrafter"/>
</dbReference>
<dbReference type="CDD" id="cd17928">
    <property type="entry name" value="DEXDc_SecA"/>
    <property type="match status" value="1"/>
</dbReference>
<dbReference type="CDD" id="cd18803">
    <property type="entry name" value="SF2_C_secA"/>
    <property type="match status" value="1"/>
</dbReference>
<dbReference type="FunFam" id="3.40.50.300:FF:000694">
    <property type="entry name" value="Preprotein translocase subunit SecA"/>
    <property type="match status" value="1"/>
</dbReference>
<dbReference type="FunFam" id="3.40.50.300:FF:003148">
    <property type="entry name" value="Protein translocase subunit SecA"/>
    <property type="match status" value="1"/>
</dbReference>
<dbReference type="Gene3D" id="1.10.3060.10">
    <property type="entry name" value="Helical scaffold and wing domains of SecA"/>
    <property type="match status" value="1"/>
</dbReference>
<dbReference type="Gene3D" id="3.40.50.300">
    <property type="entry name" value="P-loop containing nucleotide triphosphate hydrolases"/>
    <property type="match status" value="3"/>
</dbReference>
<dbReference type="HAMAP" id="MF_01382">
    <property type="entry name" value="SecA"/>
    <property type="match status" value="1"/>
</dbReference>
<dbReference type="InterPro" id="IPR014001">
    <property type="entry name" value="Helicase_ATP-bd"/>
</dbReference>
<dbReference type="InterPro" id="IPR001650">
    <property type="entry name" value="Helicase_C-like"/>
</dbReference>
<dbReference type="InterPro" id="IPR027417">
    <property type="entry name" value="P-loop_NTPase"/>
</dbReference>
<dbReference type="InterPro" id="IPR000185">
    <property type="entry name" value="SecA"/>
</dbReference>
<dbReference type="InterPro" id="IPR020937">
    <property type="entry name" value="SecA_CS"/>
</dbReference>
<dbReference type="InterPro" id="IPR011115">
    <property type="entry name" value="SecA_DEAD"/>
</dbReference>
<dbReference type="InterPro" id="IPR014018">
    <property type="entry name" value="SecA_motor_DEAD"/>
</dbReference>
<dbReference type="InterPro" id="IPR011130">
    <property type="entry name" value="SecA_preprotein_X-link_dom"/>
</dbReference>
<dbReference type="InterPro" id="IPR044722">
    <property type="entry name" value="SecA_SF2_C"/>
</dbReference>
<dbReference type="InterPro" id="IPR011116">
    <property type="entry name" value="SecA_Wing/Scaffold"/>
</dbReference>
<dbReference type="InterPro" id="IPR036266">
    <property type="entry name" value="SecA_Wing/Scaffold_sf"/>
</dbReference>
<dbReference type="InterPro" id="IPR036670">
    <property type="entry name" value="SecA_X-link_sf"/>
</dbReference>
<dbReference type="PANTHER" id="PTHR30612:SF0">
    <property type="entry name" value="CHLOROPLAST PROTEIN-TRANSPORTING ATPASE"/>
    <property type="match status" value="1"/>
</dbReference>
<dbReference type="PANTHER" id="PTHR30612">
    <property type="entry name" value="SECA INNER MEMBRANE COMPONENT OF SEC PROTEIN SECRETION SYSTEM"/>
    <property type="match status" value="1"/>
</dbReference>
<dbReference type="Pfam" id="PF21090">
    <property type="entry name" value="P-loop_SecA"/>
    <property type="match status" value="2"/>
</dbReference>
<dbReference type="Pfam" id="PF07517">
    <property type="entry name" value="SecA_DEAD"/>
    <property type="match status" value="1"/>
</dbReference>
<dbReference type="Pfam" id="PF01043">
    <property type="entry name" value="SecA_PP_bind"/>
    <property type="match status" value="1"/>
</dbReference>
<dbReference type="Pfam" id="PF07516">
    <property type="entry name" value="SecA_SW"/>
    <property type="match status" value="1"/>
</dbReference>
<dbReference type="PRINTS" id="PR00906">
    <property type="entry name" value="SECA"/>
</dbReference>
<dbReference type="SMART" id="SM00957">
    <property type="entry name" value="SecA_DEAD"/>
    <property type="match status" value="1"/>
</dbReference>
<dbReference type="SMART" id="SM00958">
    <property type="entry name" value="SecA_PP_bind"/>
    <property type="match status" value="1"/>
</dbReference>
<dbReference type="SUPFAM" id="SSF81886">
    <property type="entry name" value="Helical scaffold and wing domains of SecA"/>
    <property type="match status" value="1"/>
</dbReference>
<dbReference type="SUPFAM" id="SSF52540">
    <property type="entry name" value="P-loop containing nucleoside triphosphate hydrolases"/>
    <property type="match status" value="2"/>
</dbReference>
<dbReference type="SUPFAM" id="SSF81767">
    <property type="entry name" value="Pre-protein crosslinking domain of SecA"/>
    <property type="match status" value="1"/>
</dbReference>
<dbReference type="PROSITE" id="PS01312">
    <property type="entry name" value="SECA"/>
    <property type="match status" value="1"/>
</dbReference>
<dbReference type="PROSITE" id="PS51196">
    <property type="entry name" value="SECA_MOTOR_DEAD"/>
    <property type="match status" value="1"/>
</dbReference>
<proteinExistence type="inferred from homology"/>
<feature type="chain" id="PRO_0000321024" description="Protein translocase subunit SecA">
    <location>
        <begin position="1"/>
        <end position="871"/>
    </location>
</feature>
<feature type="binding site" evidence="1">
    <location>
        <position position="80"/>
    </location>
    <ligand>
        <name>ATP</name>
        <dbReference type="ChEBI" id="CHEBI:30616"/>
    </ligand>
</feature>
<feature type="binding site" evidence="1">
    <location>
        <begin position="98"/>
        <end position="102"/>
    </location>
    <ligand>
        <name>ATP</name>
        <dbReference type="ChEBI" id="CHEBI:30616"/>
    </ligand>
</feature>
<feature type="binding site" evidence="1">
    <location>
        <position position="537"/>
    </location>
    <ligand>
        <name>ATP</name>
        <dbReference type="ChEBI" id="CHEBI:30616"/>
    </ligand>
</feature>
<comment type="function">
    <text evidence="1">Part of the Sec protein translocase complex. Interacts with the SecYEG preprotein conducting channel. Has a central role in coupling the hydrolysis of ATP to the transfer of proteins into and across the cell membrane, serving as an ATP-driven molecular motor driving the stepwise translocation of polypeptide chains across the membrane.</text>
</comment>
<comment type="catalytic activity">
    <reaction evidence="1">
        <text>ATP + H2O + cellular proteinSide 1 = ADP + phosphate + cellular proteinSide 2.</text>
        <dbReference type="EC" id="7.4.2.8"/>
    </reaction>
</comment>
<comment type="subunit">
    <text evidence="1">Monomer and homodimer. Part of the essential Sec protein translocation apparatus which comprises SecA, SecYEG and auxiliary proteins SecDF. Other proteins may also be involved.</text>
</comment>
<comment type="subcellular location">
    <subcellularLocation>
        <location evidence="1">Cell inner membrane</location>
        <topology evidence="1">Peripheral membrane protein</topology>
        <orientation evidence="1">Cytoplasmic side</orientation>
    </subcellularLocation>
    <subcellularLocation>
        <location evidence="1">Cytoplasm</location>
    </subcellularLocation>
    <text evidence="1">Distribution is 50-50.</text>
</comment>
<comment type="similarity">
    <text evidence="1">Belongs to the SecA family.</text>
</comment>
<keyword id="KW-0067">ATP-binding</keyword>
<keyword id="KW-0997">Cell inner membrane</keyword>
<keyword id="KW-1003">Cell membrane</keyword>
<keyword id="KW-0963">Cytoplasm</keyword>
<keyword id="KW-0472">Membrane</keyword>
<keyword id="KW-0547">Nucleotide-binding</keyword>
<keyword id="KW-0653">Protein transport</keyword>
<keyword id="KW-1278">Translocase</keyword>
<keyword id="KW-0811">Translocation</keyword>
<keyword id="KW-0813">Transport</keyword>
<accession>A5IM05</accession>
<gene>
    <name evidence="1" type="primary">secA</name>
    <name type="ordered locus">Tpet_1214</name>
</gene>